<sequence>MKLHELKPSEGSRKERNRVGRGTGSGNGKTSGRGHKGQKARSGGGVRLGFEGGQLPLFRRIPKRGFTNINRKEFAIVNLDVLNRFEDGTEVTPELLIETGIIRNEKSGIKILSDGNIEKKLTVKANKFSAAAKEAIEAAGGKTEVI</sequence>
<protein>
    <recommendedName>
        <fullName evidence="1">Large ribosomal subunit protein uL15</fullName>
    </recommendedName>
    <alternativeName>
        <fullName evidence="3">50S ribosomal protein L15</fullName>
    </alternativeName>
</protein>
<proteinExistence type="inferred from homology"/>
<accession>Q927M6</accession>
<comment type="function">
    <text evidence="1">Binds to the 23S rRNA.</text>
</comment>
<comment type="subunit">
    <text evidence="1">Part of the 50S ribosomal subunit.</text>
</comment>
<comment type="similarity">
    <text evidence="1">Belongs to the universal ribosomal protein uL15 family.</text>
</comment>
<gene>
    <name evidence="1" type="primary">rplO</name>
    <name type="ordered locus">lin2762</name>
</gene>
<reference key="1">
    <citation type="journal article" date="2001" name="Science">
        <title>Comparative genomics of Listeria species.</title>
        <authorList>
            <person name="Glaser P."/>
            <person name="Frangeul L."/>
            <person name="Buchrieser C."/>
            <person name="Rusniok C."/>
            <person name="Amend A."/>
            <person name="Baquero F."/>
            <person name="Berche P."/>
            <person name="Bloecker H."/>
            <person name="Brandt P."/>
            <person name="Chakraborty T."/>
            <person name="Charbit A."/>
            <person name="Chetouani F."/>
            <person name="Couve E."/>
            <person name="de Daruvar A."/>
            <person name="Dehoux P."/>
            <person name="Domann E."/>
            <person name="Dominguez-Bernal G."/>
            <person name="Duchaud E."/>
            <person name="Durant L."/>
            <person name="Dussurget O."/>
            <person name="Entian K.-D."/>
            <person name="Fsihi H."/>
            <person name="Garcia-del Portillo F."/>
            <person name="Garrido P."/>
            <person name="Gautier L."/>
            <person name="Goebel W."/>
            <person name="Gomez-Lopez N."/>
            <person name="Hain T."/>
            <person name="Hauf J."/>
            <person name="Jackson D."/>
            <person name="Jones L.-M."/>
            <person name="Kaerst U."/>
            <person name="Kreft J."/>
            <person name="Kuhn M."/>
            <person name="Kunst F."/>
            <person name="Kurapkat G."/>
            <person name="Madueno E."/>
            <person name="Maitournam A."/>
            <person name="Mata Vicente J."/>
            <person name="Ng E."/>
            <person name="Nedjari H."/>
            <person name="Nordsiek G."/>
            <person name="Novella S."/>
            <person name="de Pablos B."/>
            <person name="Perez-Diaz J.-C."/>
            <person name="Purcell R."/>
            <person name="Remmel B."/>
            <person name="Rose M."/>
            <person name="Schlueter T."/>
            <person name="Simoes N."/>
            <person name="Tierrez A."/>
            <person name="Vazquez-Boland J.-A."/>
            <person name="Voss H."/>
            <person name="Wehland J."/>
            <person name="Cossart P."/>
        </authorList>
    </citation>
    <scope>NUCLEOTIDE SEQUENCE [LARGE SCALE GENOMIC DNA]</scope>
    <source>
        <strain>ATCC BAA-680 / CLIP 11262</strain>
    </source>
</reference>
<keyword id="KW-0687">Ribonucleoprotein</keyword>
<keyword id="KW-0689">Ribosomal protein</keyword>
<keyword id="KW-0694">RNA-binding</keyword>
<keyword id="KW-0699">rRNA-binding</keyword>
<evidence type="ECO:0000255" key="1">
    <source>
        <dbReference type="HAMAP-Rule" id="MF_01341"/>
    </source>
</evidence>
<evidence type="ECO:0000256" key="2">
    <source>
        <dbReference type="SAM" id="MobiDB-lite"/>
    </source>
</evidence>
<evidence type="ECO:0000305" key="3"/>
<feature type="chain" id="PRO_0000104745" description="Large ribosomal subunit protein uL15">
    <location>
        <begin position="1"/>
        <end position="146"/>
    </location>
</feature>
<feature type="region of interest" description="Disordered" evidence="2">
    <location>
        <begin position="1"/>
        <end position="50"/>
    </location>
</feature>
<feature type="compositionally biased region" description="Basic and acidic residues" evidence="2">
    <location>
        <begin position="1"/>
        <end position="18"/>
    </location>
</feature>
<feature type="compositionally biased region" description="Gly residues" evidence="2">
    <location>
        <begin position="21"/>
        <end position="31"/>
    </location>
</feature>
<dbReference type="EMBL" id="AL596173">
    <property type="protein sequence ID" value="CAC97988.1"/>
    <property type="molecule type" value="Genomic_DNA"/>
</dbReference>
<dbReference type="PIR" id="AD1777">
    <property type="entry name" value="AD1777"/>
</dbReference>
<dbReference type="RefSeq" id="WP_003764125.1">
    <property type="nucleotide sequence ID" value="NC_003212.1"/>
</dbReference>
<dbReference type="SMR" id="Q927M6"/>
<dbReference type="STRING" id="272626.gene:17567149"/>
<dbReference type="GeneID" id="93236035"/>
<dbReference type="KEGG" id="lin:rplO"/>
<dbReference type="eggNOG" id="COG0200">
    <property type="taxonomic scope" value="Bacteria"/>
</dbReference>
<dbReference type="HOGENOM" id="CLU_055188_4_2_9"/>
<dbReference type="OrthoDB" id="9810293at2"/>
<dbReference type="Proteomes" id="UP000002513">
    <property type="component" value="Chromosome"/>
</dbReference>
<dbReference type="GO" id="GO:0022625">
    <property type="term" value="C:cytosolic large ribosomal subunit"/>
    <property type="evidence" value="ECO:0007669"/>
    <property type="project" value="TreeGrafter"/>
</dbReference>
<dbReference type="GO" id="GO:0019843">
    <property type="term" value="F:rRNA binding"/>
    <property type="evidence" value="ECO:0007669"/>
    <property type="project" value="UniProtKB-UniRule"/>
</dbReference>
<dbReference type="GO" id="GO:0003735">
    <property type="term" value="F:structural constituent of ribosome"/>
    <property type="evidence" value="ECO:0007669"/>
    <property type="project" value="InterPro"/>
</dbReference>
<dbReference type="GO" id="GO:0006412">
    <property type="term" value="P:translation"/>
    <property type="evidence" value="ECO:0007669"/>
    <property type="project" value="UniProtKB-UniRule"/>
</dbReference>
<dbReference type="FunFam" id="3.100.10.10:FF:000004">
    <property type="entry name" value="50S ribosomal protein L15"/>
    <property type="match status" value="1"/>
</dbReference>
<dbReference type="Gene3D" id="3.100.10.10">
    <property type="match status" value="1"/>
</dbReference>
<dbReference type="HAMAP" id="MF_01341">
    <property type="entry name" value="Ribosomal_uL15"/>
    <property type="match status" value="1"/>
</dbReference>
<dbReference type="InterPro" id="IPR030878">
    <property type="entry name" value="Ribosomal_uL15"/>
</dbReference>
<dbReference type="InterPro" id="IPR021131">
    <property type="entry name" value="Ribosomal_uL15/eL18"/>
</dbReference>
<dbReference type="InterPro" id="IPR036227">
    <property type="entry name" value="Ribosomal_uL15/eL18_sf"/>
</dbReference>
<dbReference type="InterPro" id="IPR005749">
    <property type="entry name" value="Ribosomal_uL15_bac-type"/>
</dbReference>
<dbReference type="InterPro" id="IPR001196">
    <property type="entry name" value="Ribosomal_uL15_CS"/>
</dbReference>
<dbReference type="NCBIfam" id="TIGR01071">
    <property type="entry name" value="rplO_bact"/>
    <property type="match status" value="1"/>
</dbReference>
<dbReference type="PANTHER" id="PTHR12934">
    <property type="entry name" value="50S RIBOSOMAL PROTEIN L15"/>
    <property type="match status" value="1"/>
</dbReference>
<dbReference type="PANTHER" id="PTHR12934:SF11">
    <property type="entry name" value="LARGE RIBOSOMAL SUBUNIT PROTEIN UL15M"/>
    <property type="match status" value="1"/>
</dbReference>
<dbReference type="Pfam" id="PF00828">
    <property type="entry name" value="Ribosomal_L27A"/>
    <property type="match status" value="1"/>
</dbReference>
<dbReference type="SUPFAM" id="SSF52080">
    <property type="entry name" value="Ribosomal proteins L15p and L18e"/>
    <property type="match status" value="1"/>
</dbReference>
<dbReference type="PROSITE" id="PS00475">
    <property type="entry name" value="RIBOSOMAL_L15"/>
    <property type="match status" value="1"/>
</dbReference>
<organism>
    <name type="scientific">Listeria innocua serovar 6a (strain ATCC BAA-680 / CLIP 11262)</name>
    <dbReference type="NCBI Taxonomy" id="272626"/>
    <lineage>
        <taxon>Bacteria</taxon>
        <taxon>Bacillati</taxon>
        <taxon>Bacillota</taxon>
        <taxon>Bacilli</taxon>
        <taxon>Bacillales</taxon>
        <taxon>Listeriaceae</taxon>
        <taxon>Listeria</taxon>
    </lineage>
</organism>
<name>RL15_LISIN</name>